<sequence length="223" mass="24664">MSPDTLIIRQLGLQPWAPVSLAMHQFTDQRNDETPDEIWLVEHLPVFTQGQAGKSEHLLMPGDIPVMQSDRGGQVTYHGPGQQVMYVMINLKRRRVGVRQLVTAIEQTVVDTLAAFSVSANARSDAPGVYVDGKKICSLGLRIRQGCSFHGLALNVDMDLSPFQRINPCGYAGLEMTQLTQQHPGATLAAVQPLLIAHFAHHLAITDIDWREDPSLPFSSLRH</sequence>
<reference key="1">
    <citation type="journal article" date="2008" name="Environ. Microbiol.">
        <title>The genome of Erwinia tasmaniensis strain Et1/99, a non-pathogenic bacterium in the genus Erwinia.</title>
        <authorList>
            <person name="Kube M."/>
            <person name="Migdoll A.M."/>
            <person name="Mueller I."/>
            <person name="Kuhl H."/>
            <person name="Beck A."/>
            <person name="Reinhardt R."/>
            <person name="Geider K."/>
        </authorList>
    </citation>
    <scope>NUCLEOTIDE SEQUENCE [LARGE SCALE GENOMIC DNA]</scope>
    <source>
        <strain>DSM 17950 / CFBP 7177 / CIP 109463 / NCPPB 4357 / Et1/99</strain>
    </source>
</reference>
<proteinExistence type="inferred from homology"/>
<name>LIPB_ERWT9</name>
<evidence type="ECO:0000255" key="1">
    <source>
        <dbReference type="HAMAP-Rule" id="MF_00013"/>
    </source>
</evidence>
<evidence type="ECO:0000255" key="2">
    <source>
        <dbReference type="PROSITE-ProRule" id="PRU01067"/>
    </source>
</evidence>
<accession>B2VBK0</accession>
<dbReference type="EC" id="2.3.1.181" evidence="1"/>
<dbReference type="EMBL" id="CU468135">
    <property type="protein sequence ID" value="CAO97404.1"/>
    <property type="molecule type" value="Genomic_DNA"/>
</dbReference>
<dbReference type="RefSeq" id="WP_012442073.1">
    <property type="nucleotide sequence ID" value="NC_010694.1"/>
</dbReference>
<dbReference type="SMR" id="B2VBK0"/>
<dbReference type="STRING" id="465817.ETA_23580"/>
<dbReference type="KEGG" id="eta:ETA_23580"/>
<dbReference type="eggNOG" id="COG0321">
    <property type="taxonomic scope" value="Bacteria"/>
</dbReference>
<dbReference type="HOGENOM" id="CLU_035168_3_1_6"/>
<dbReference type="OrthoDB" id="9787061at2"/>
<dbReference type="UniPathway" id="UPA00538">
    <property type="reaction ID" value="UER00592"/>
</dbReference>
<dbReference type="Proteomes" id="UP000001726">
    <property type="component" value="Chromosome"/>
</dbReference>
<dbReference type="GO" id="GO:0005737">
    <property type="term" value="C:cytoplasm"/>
    <property type="evidence" value="ECO:0007669"/>
    <property type="project" value="UniProtKB-SubCell"/>
</dbReference>
<dbReference type="GO" id="GO:0033819">
    <property type="term" value="F:lipoyl(octanoyl) transferase activity"/>
    <property type="evidence" value="ECO:0007669"/>
    <property type="project" value="UniProtKB-EC"/>
</dbReference>
<dbReference type="GO" id="GO:0036211">
    <property type="term" value="P:protein modification process"/>
    <property type="evidence" value="ECO:0007669"/>
    <property type="project" value="InterPro"/>
</dbReference>
<dbReference type="CDD" id="cd16444">
    <property type="entry name" value="LipB"/>
    <property type="match status" value="1"/>
</dbReference>
<dbReference type="FunFam" id="3.30.930.10:FF:000020">
    <property type="entry name" value="Octanoyltransferase"/>
    <property type="match status" value="1"/>
</dbReference>
<dbReference type="Gene3D" id="3.30.930.10">
    <property type="entry name" value="Bira Bifunctional Protein, Domain 2"/>
    <property type="match status" value="1"/>
</dbReference>
<dbReference type="HAMAP" id="MF_00013">
    <property type="entry name" value="LipB"/>
    <property type="match status" value="1"/>
</dbReference>
<dbReference type="InterPro" id="IPR045864">
    <property type="entry name" value="aa-tRNA-synth_II/BPL/LPL"/>
</dbReference>
<dbReference type="InterPro" id="IPR004143">
    <property type="entry name" value="BPL_LPL_catalytic"/>
</dbReference>
<dbReference type="InterPro" id="IPR000544">
    <property type="entry name" value="Octanoyltransferase"/>
</dbReference>
<dbReference type="InterPro" id="IPR020605">
    <property type="entry name" value="Octanoyltransferase_CS"/>
</dbReference>
<dbReference type="NCBIfam" id="TIGR00214">
    <property type="entry name" value="lipB"/>
    <property type="match status" value="1"/>
</dbReference>
<dbReference type="NCBIfam" id="NF010922">
    <property type="entry name" value="PRK14342.1"/>
    <property type="match status" value="1"/>
</dbReference>
<dbReference type="PANTHER" id="PTHR10993:SF7">
    <property type="entry name" value="LIPOYLTRANSFERASE 2, MITOCHONDRIAL-RELATED"/>
    <property type="match status" value="1"/>
</dbReference>
<dbReference type="PANTHER" id="PTHR10993">
    <property type="entry name" value="OCTANOYLTRANSFERASE"/>
    <property type="match status" value="1"/>
</dbReference>
<dbReference type="Pfam" id="PF21948">
    <property type="entry name" value="LplA-B_cat"/>
    <property type="match status" value="1"/>
</dbReference>
<dbReference type="PIRSF" id="PIRSF016262">
    <property type="entry name" value="LPLase"/>
    <property type="match status" value="1"/>
</dbReference>
<dbReference type="SUPFAM" id="SSF55681">
    <property type="entry name" value="Class II aaRS and biotin synthetases"/>
    <property type="match status" value="1"/>
</dbReference>
<dbReference type="PROSITE" id="PS51733">
    <property type="entry name" value="BPL_LPL_CATALYTIC"/>
    <property type="match status" value="1"/>
</dbReference>
<dbReference type="PROSITE" id="PS01313">
    <property type="entry name" value="LIPB"/>
    <property type="match status" value="1"/>
</dbReference>
<gene>
    <name evidence="1" type="primary">lipB</name>
    <name type="ordered locus">ETA_23580</name>
</gene>
<feature type="chain" id="PRO_1000089457" description="Octanoyltransferase">
    <location>
        <begin position="1"/>
        <end position="223"/>
    </location>
</feature>
<feature type="domain" description="BPL/LPL catalytic" evidence="2">
    <location>
        <begin position="32"/>
        <end position="207"/>
    </location>
</feature>
<feature type="active site" description="Acyl-thioester intermediate" evidence="1">
    <location>
        <position position="169"/>
    </location>
</feature>
<feature type="binding site" evidence="1">
    <location>
        <begin position="71"/>
        <end position="78"/>
    </location>
    <ligand>
        <name>substrate</name>
    </ligand>
</feature>
<feature type="binding site" evidence="1">
    <location>
        <begin position="138"/>
        <end position="140"/>
    </location>
    <ligand>
        <name>substrate</name>
    </ligand>
</feature>
<feature type="binding site" evidence="1">
    <location>
        <begin position="151"/>
        <end position="153"/>
    </location>
    <ligand>
        <name>substrate</name>
    </ligand>
</feature>
<feature type="site" description="Lowers pKa of active site Cys" evidence="1">
    <location>
        <position position="135"/>
    </location>
</feature>
<protein>
    <recommendedName>
        <fullName evidence="1">Octanoyltransferase</fullName>
        <ecNumber evidence="1">2.3.1.181</ecNumber>
    </recommendedName>
    <alternativeName>
        <fullName evidence="1">Lipoate-protein ligase B</fullName>
    </alternativeName>
    <alternativeName>
        <fullName evidence="1">Lipoyl/octanoyl transferase</fullName>
    </alternativeName>
    <alternativeName>
        <fullName evidence="1">Octanoyl-[acyl-carrier-protein]-protein N-octanoyltransferase</fullName>
    </alternativeName>
</protein>
<organism>
    <name type="scientific">Erwinia tasmaniensis (strain DSM 17950 / CFBP 7177 / CIP 109463 / NCPPB 4357 / Et1/99)</name>
    <dbReference type="NCBI Taxonomy" id="465817"/>
    <lineage>
        <taxon>Bacteria</taxon>
        <taxon>Pseudomonadati</taxon>
        <taxon>Pseudomonadota</taxon>
        <taxon>Gammaproteobacteria</taxon>
        <taxon>Enterobacterales</taxon>
        <taxon>Erwiniaceae</taxon>
        <taxon>Erwinia</taxon>
    </lineage>
</organism>
<comment type="function">
    <text evidence="1">Catalyzes the transfer of endogenously produced octanoic acid from octanoyl-acyl-carrier-protein onto the lipoyl domains of lipoate-dependent enzymes. Lipoyl-ACP can also act as a substrate although octanoyl-ACP is likely to be the physiological substrate.</text>
</comment>
<comment type="catalytic activity">
    <reaction evidence="1">
        <text>octanoyl-[ACP] + L-lysyl-[protein] = N(6)-octanoyl-L-lysyl-[protein] + holo-[ACP] + H(+)</text>
        <dbReference type="Rhea" id="RHEA:17665"/>
        <dbReference type="Rhea" id="RHEA-COMP:9636"/>
        <dbReference type="Rhea" id="RHEA-COMP:9685"/>
        <dbReference type="Rhea" id="RHEA-COMP:9752"/>
        <dbReference type="Rhea" id="RHEA-COMP:9928"/>
        <dbReference type="ChEBI" id="CHEBI:15378"/>
        <dbReference type="ChEBI" id="CHEBI:29969"/>
        <dbReference type="ChEBI" id="CHEBI:64479"/>
        <dbReference type="ChEBI" id="CHEBI:78463"/>
        <dbReference type="ChEBI" id="CHEBI:78809"/>
        <dbReference type="EC" id="2.3.1.181"/>
    </reaction>
</comment>
<comment type="pathway">
    <text evidence="1">Protein modification; protein lipoylation via endogenous pathway; protein N(6)-(lipoyl)lysine from octanoyl-[acyl-carrier-protein]: step 1/2.</text>
</comment>
<comment type="subcellular location">
    <subcellularLocation>
        <location evidence="1">Cytoplasm</location>
    </subcellularLocation>
</comment>
<comment type="miscellaneous">
    <text evidence="1">In the reaction, the free carboxyl group of octanoic acid is attached via an amide linkage to the epsilon-amino group of a specific lysine residue of lipoyl domains of lipoate-dependent enzymes.</text>
</comment>
<comment type="similarity">
    <text evidence="1">Belongs to the LipB family.</text>
</comment>
<keyword id="KW-0012">Acyltransferase</keyword>
<keyword id="KW-0963">Cytoplasm</keyword>
<keyword id="KW-1185">Reference proteome</keyword>
<keyword id="KW-0808">Transferase</keyword>